<feature type="chain" id="PRO_0000272637" description="Protein translocase subunit SecF">
    <location>
        <begin position="1"/>
        <end position="303"/>
    </location>
</feature>
<feature type="transmembrane region" description="Helical" evidence="1">
    <location>
        <begin position="28"/>
        <end position="48"/>
    </location>
</feature>
<feature type="transmembrane region" description="Helical" evidence="1">
    <location>
        <begin position="140"/>
        <end position="160"/>
    </location>
</feature>
<feature type="transmembrane region" description="Helical" evidence="1">
    <location>
        <begin position="164"/>
        <end position="184"/>
    </location>
</feature>
<feature type="transmembrane region" description="Helical" evidence="1">
    <location>
        <begin position="194"/>
        <end position="214"/>
    </location>
</feature>
<feature type="transmembrane region" description="Helical" evidence="1">
    <location>
        <begin position="246"/>
        <end position="266"/>
    </location>
</feature>
<feature type="transmembrane region" description="Helical" evidence="1">
    <location>
        <begin position="272"/>
        <end position="292"/>
    </location>
</feature>
<sequence>MQIYPLRLLPNKIDFDFMNFKKVSYTFSIILSLISFIWIGMYKFNFGIDFAGGIVIEVRLDQTPDLPKMRQVLGELGIGEVVLQNFGSERDLSIRFGSSSEDNLMKNIELIKSTLQNNFPYNFEYRKVDFVGPQVGRQLIEAGTMAMLFSFAAIMIYIWVRFEWYFGLGILIALVHDVILALGFMSITKLDFNLSTIAAVLTIIGYSVNDSVVIYDRIRENLRKYHKKGITEIINLSINETLSRTILTVVTTLLANLALVLFGGEAIRSFSVLVFFGIIAGTYSSIFISAPILTIFANKKFEK</sequence>
<accession>Q1RH99</accession>
<dbReference type="EMBL" id="CP000087">
    <property type="protein sequence ID" value="ABE05265.1"/>
    <property type="molecule type" value="Genomic_DNA"/>
</dbReference>
<dbReference type="RefSeq" id="WP_011477843.1">
    <property type="nucleotide sequence ID" value="NC_007940.1"/>
</dbReference>
<dbReference type="SMR" id="Q1RH99"/>
<dbReference type="KEGG" id="rbe:RBE_1184"/>
<dbReference type="eggNOG" id="COG0341">
    <property type="taxonomic scope" value="Bacteria"/>
</dbReference>
<dbReference type="HOGENOM" id="CLU_050012_1_1_5"/>
<dbReference type="OrthoDB" id="9774769at2"/>
<dbReference type="Proteomes" id="UP000001951">
    <property type="component" value="Chromosome"/>
</dbReference>
<dbReference type="GO" id="GO:0005886">
    <property type="term" value="C:plasma membrane"/>
    <property type="evidence" value="ECO:0007669"/>
    <property type="project" value="UniProtKB-SubCell"/>
</dbReference>
<dbReference type="GO" id="GO:0015450">
    <property type="term" value="F:protein-transporting ATPase activity"/>
    <property type="evidence" value="ECO:0007669"/>
    <property type="project" value="InterPro"/>
</dbReference>
<dbReference type="GO" id="GO:0065002">
    <property type="term" value="P:intracellular protein transmembrane transport"/>
    <property type="evidence" value="ECO:0007669"/>
    <property type="project" value="UniProtKB-UniRule"/>
</dbReference>
<dbReference type="GO" id="GO:0006605">
    <property type="term" value="P:protein targeting"/>
    <property type="evidence" value="ECO:0007669"/>
    <property type="project" value="UniProtKB-UniRule"/>
</dbReference>
<dbReference type="GO" id="GO:0043952">
    <property type="term" value="P:protein transport by the Sec complex"/>
    <property type="evidence" value="ECO:0007669"/>
    <property type="project" value="UniProtKB-UniRule"/>
</dbReference>
<dbReference type="FunFam" id="1.20.1640.10:FF:000024">
    <property type="entry name" value="Multifunctional fusion protein"/>
    <property type="match status" value="1"/>
</dbReference>
<dbReference type="Gene3D" id="1.20.1640.10">
    <property type="entry name" value="Multidrug efflux transporter AcrB transmembrane domain"/>
    <property type="match status" value="1"/>
</dbReference>
<dbReference type="HAMAP" id="MF_01464_B">
    <property type="entry name" value="SecF_B"/>
    <property type="match status" value="1"/>
</dbReference>
<dbReference type="InterPro" id="IPR022813">
    <property type="entry name" value="SecD/SecF_arch_bac"/>
</dbReference>
<dbReference type="InterPro" id="IPR022645">
    <property type="entry name" value="SecD/SecF_bac"/>
</dbReference>
<dbReference type="InterPro" id="IPR022646">
    <property type="entry name" value="SecD/SecF_CS"/>
</dbReference>
<dbReference type="InterPro" id="IPR048634">
    <property type="entry name" value="SecD_SecF_C"/>
</dbReference>
<dbReference type="InterPro" id="IPR055344">
    <property type="entry name" value="SecD_SecF_C_bact"/>
</dbReference>
<dbReference type="InterPro" id="IPR005665">
    <property type="entry name" value="SecF_bac"/>
</dbReference>
<dbReference type="InterPro" id="IPR000731">
    <property type="entry name" value="SSD"/>
</dbReference>
<dbReference type="NCBIfam" id="TIGR00916">
    <property type="entry name" value="2A0604s01"/>
    <property type="match status" value="1"/>
</dbReference>
<dbReference type="NCBIfam" id="TIGR00966">
    <property type="entry name" value="transloc_SecF"/>
    <property type="match status" value="1"/>
</dbReference>
<dbReference type="PANTHER" id="PTHR30081:SF8">
    <property type="entry name" value="PROTEIN TRANSLOCASE SUBUNIT SECF"/>
    <property type="match status" value="1"/>
</dbReference>
<dbReference type="PANTHER" id="PTHR30081">
    <property type="entry name" value="PROTEIN-EXPORT MEMBRANE PROTEIN SEC"/>
    <property type="match status" value="1"/>
</dbReference>
<dbReference type="Pfam" id="PF07549">
    <property type="entry name" value="Sec_GG"/>
    <property type="match status" value="1"/>
</dbReference>
<dbReference type="Pfam" id="PF02355">
    <property type="entry name" value="SecD_SecF_C"/>
    <property type="match status" value="1"/>
</dbReference>
<dbReference type="PRINTS" id="PR01755">
    <property type="entry name" value="SECFTRNLCASE"/>
</dbReference>
<dbReference type="SUPFAM" id="SSF82866">
    <property type="entry name" value="Multidrug efflux transporter AcrB transmembrane domain"/>
    <property type="match status" value="1"/>
</dbReference>
<dbReference type="PROSITE" id="PS50156">
    <property type="entry name" value="SSD"/>
    <property type="match status" value="1"/>
</dbReference>
<proteinExistence type="inferred from homology"/>
<reference key="1">
    <citation type="journal article" date="2006" name="PLoS Genet.">
        <title>Genome sequence of Rickettsia bellii illuminates the role of amoebae in gene exchanges between intracellular pathogens.</title>
        <authorList>
            <person name="Ogata H."/>
            <person name="La Scola B."/>
            <person name="Audic S."/>
            <person name="Renesto P."/>
            <person name="Blanc G."/>
            <person name="Robert C."/>
            <person name="Fournier P.-E."/>
            <person name="Claverie J.-M."/>
            <person name="Raoult D."/>
        </authorList>
    </citation>
    <scope>NUCLEOTIDE SEQUENCE [LARGE SCALE GENOMIC DNA]</scope>
    <source>
        <strain>RML369-C</strain>
    </source>
</reference>
<comment type="function">
    <text evidence="1">Part of the Sec protein translocase complex. Interacts with the SecYEG preprotein conducting channel. SecDF uses the proton motive force (PMF) to complete protein translocation after the ATP-dependent function of SecA.</text>
</comment>
<comment type="subunit">
    <text evidence="1">Forms a complex with SecD. Part of the essential Sec protein translocation apparatus which comprises SecA, SecYEG and auxiliary proteins SecDF-YajC and YidC.</text>
</comment>
<comment type="subcellular location">
    <subcellularLocation>
        <location evidence="1">Cell inner membrane</location>
        <topology evidence="1">Multi-pass membrane protein</topology>
    </subcellularLocation>
</comment>
<comment type="similarity">
    <text evidence="1">Belongs to the SecD/SecF family. SecF subfamily.</text>
</comment>
<keyword id="KW-0997">Cell inner membrane</keyword>
<keyword id="KW-1003">Cell membrane</keyword>
<keyword id="KW-0472">Membrane</keyword>
<keyword id="KW-0653">Protein transport</keyword>
<keyword id="KW-0811">Translocation</keyword>
<keyword id="KW-0812">Transmembrane</keyword>
<keyword id="KW-1133">Transmembrane helix</keyword>
<keyword id="KW-0813">Transport</keyword>
<evidence type="ECO:0000255" key="1">
    <source>
        <dbReference type="HAMAP-Rule" id="MF_01464"/>
    </source>
</evidence>
<gene>
    <name evidence="1" type="primary">secF</name>
    <name type="ordered locus">RBE_1184</name>
</gene>
<name>SECF_RICBR</name>
<protein>
    <recommendedName>
        <fullName>Protein translocase subunit SecF</fullName>
    </recommendedName>
</protein>
<organism>
    <name type="scientific">Rickettsia bellii (strain RML369-C)</name>
    <dbReference type="NCBI Taxonomy" id="336407"/>
    <lineage>
        <taxon>Bacteria</taxon>
        <taxon>Pseudomonadati</taxon>
        <taxon>Pseudomonadota</taxon>
        <taxon>Alphaproteobacteria</taxon>
        <taxon>Rickettsiales</taxon>
        <taxon>Rickettsiaceae</taxon>
        <taxon>Rickettsieae</taxon>
        <taxon>Rickettsia</taxon>
        <taxon>belli group</taxon>
    </lineage>
</organism>